<sequence>MAEPTKIKILGQESIIADFGLWRNYVAKDLISGCPSTTYVLITDTNIGSIYTPGFQKTFEDAATAVSPAPRLLVYHCPPGEVSKSRQTKADIEDWMLSQSPPCGRDTVVIALGGGVIGDLTGFVASTYMRGVRYVQVPTTLLAMVDSSIGGKTAIDTPLGKNLIGAIWQPTRIYIDLEFLETLPVREFVNGMAEVIKTAAISSEEEFTALEDNAEAILTAVRSERKPGQRWFEGIEDILKARILASARHKAYVVSADEREGGLRNLLNWGHSIGHAIEAILTPQVLHGECVAIGMVKEAELARHLGILKGVAVARIVKCIAAYGLPTSLKDSRIRKLTAGKHCSVDQLLFNMALDKKNDGPKKKIVLLSAIGRTYEPKASVVPNEDIGVVLAPSIEVHPGVEPASNIICIPPGSKSISNRALVLAALGSGTCRVKNLLHSDDTEVMLNALERLGAATFSWEEEGEVLVVNGKGGNLQASPSELYLGNAGTASRFLTTVATLANASSVDSSILTGNNRMKQRPIGDLVDALTANGASVEYVERKGSLPLKVAASGGFAGGRINLAAKVSSQYVSSLLMCAPYAKEPVTLKLVGGKPISQPYIDMTTAMMRSFGIDVQKSTTEEHTYHIPQGRYVNPAEYVIESDASSATYPLAIAAITGTTCTVPNIGSKSLQGDARFAVEVLGPMGCTVKQTDTSTTVVGPSDGILRPLPNVDMEPMTDAFLTASVLAAVARGDGASHTTRIYGIANQRVKECNRIKAMKDELAKFGVVCREHDDGLEIDGIDRSTLRQPAGGVYCYDDHRVAFSFSVLSLVAPQPTLILEKECVGKTWPGWWDTLRQKFSAKLEGKELKEEESSPLAGAGRATASVFIIGMRGAGKTTTGRWVAKTLNRPFVDLDTELENVEGQTIPDIVKQRGWQGFRDAELSLLQRTLKERSSGYVLACGGGIVEIPEARKLLIDYHKNKGNVMLIMRDIKQVMDFLNIDKTRPAYVEDMMGVWLRRKPWFQECSNIQYYSQHATGKLAKASEDFTRFFNVVTGEADSLSIIKRKKHSFFVSLTLPDLRTAGDILEKVCVGSDAVELRVDLLKDPASDSDIPSVDYVAEQMAFLRSYVSLPLIFTIRTKSQGGRFPDDAHDAAMELYRLAFRSGSEFVDLEIAFPDEMLRAVTEMKGYSKIIASHHDPKGELSWANMSWMKYYNRALEYGDIIKLVGVAKNLDDNTALRKFKSWAEEAHETPLIAINMGDNGQLSRILNGFMTPVSHPSLPFKAAPGQLSATEIRKGLSLMGEIKQKKFAVFGTPVSGSRSPVLHNTLFSQAGLPHEYGRLETANVEDVKDFIRSPDFGGASVTIPLKLDIMPLLDHITPEAEIIGAVNTIIPVADGDKPARLVGSNTDWQGMTLSLHNAGVETANKDASALVIGGGGTARAAIYALHSMGFSPIYVIGRSAPKLQSMVSTFPSSYNIQVIDSPETLKTIPTVAIGTIPADKPIDPVMRETLCHMFERAQEADADVVKTGEKAHRVLLEMAYKPSVTALMQLASDSNWHTIPGLEVLVGQGWYQVSSKPYTYSIQYQKLTRYIVQTLDWDFSPLRGCKSRRA</sequence>
<comment type="function">
    <text evidence="1">The AROM polypeptide catalyzes 5 consecutive enzymatic reactions in prechorismate polyaromatic amino acid biosynthesis.</text>
</comment>
<comment type="catalytic activity">
    <reaction evidence="1">
        <text>7-phospho-2-dehydro-3-deoxy-D-arabino-heptonate = 3-dehydroquinate + phosphate</text>
        <dbReference type="Rhea" id="RHEA:21968"/>
        <dbReference type="ChEBI" id="CHEBI:32364"/>
        <dbReference type="ChEBI" id="CHEBI:43474"/>
        <dbReference type="ChEBI" id="CHEBI:58394"/>
        <dbReference type="EC" id="4.2.3.4"/>
    </reaction>
</comment>
<comment type="catalytic activity">
    <reaction evidence="1">
        <text>3-dehydroquinate = 3-dehydroshikimate + H2O</text>
        <dbReference type="Rhea" id="RHEA:21096"/>
        <dbReference type="ChEBI" id="CHEBI:15377"/>
        <dbReference type="ChEBI" id="CHEBI:16630"/>
        <dbReference type="ChEBI" id="CHEBI:32364"/>
        <dbReference type="EC" id="4.2.1.10"/>
    </reaction>
</comment>
<comment type="catalytic activity">
    <reaction evidence="1">
        <text>shikimate + NADP(+) = 3-dehydroshikimate + NADPH + H(+)</text>
        <dbReference type="Rhea" id="RHEA:17737"/>
        <dbReference type="ChEBI" id="CHEBI:15378"/>
        <dbReference type="ChEBI" id="CHEBI:16630"/>
        <dbReference type="ChEBI" id="CHEBI:36208"/>
        <dbReference type="ChEBI" id="CHEBI:57783"/>
        <dbReference type="ChEBI" id="CHEBI:58349"/>
        <dbReference type="EC" id="1.1.1.25"/>
    </reaction>
</comment>
<comment type="catalytic activity">
    <reaction evidence="1">
        <text>shikimate + ATP = 3-phosphoshikimate + ADP + H(+)</text>
        <dbReference type="Rhea" id="RHEA:13121"/>
        <dbReference type="ChEBI" id="CHEBI:15378"/>
        <dbReference type="ChEBI" id="CHEBI:30616"/>
        <dbReference type="ChEBI" id="CHEBI:36208"/>
        <dbReference type="ChEBI" id="CHEBI:145989"/>
        <dbReference type="ChEBI" id="CHEBI:456216"/>
        <dbReference type="EC" id="2.7.1.71"/>
    </reaction>
</comment>
<comment type="catalytic activity">
    <reaction evidence="1">
        <text>3-phosphoshikimate + phosphoenolpyruvate = 5-O-(1-carboxyvinyl)-3-phosphoshikimate + phosphate</text>
        <dbReference type="Rhea" id="RHEA:21256"/>
        <dbReference type="ChEBI" id="CHEBI:43474"/>
        <dbReference type="ChEBI" id="CHEBI:57701"/>
        <dbReference type="ChEBI" id="CHEBI:58702"/>
        <dbReference type="ChEBI" id="CHEBI:145989"/>
        <dbReference type="EC" id="2.5.1.19"/>
    </reaction>
</comment>
<comment type="cofactor">
    <cofactor>
        <name>Zn(2+)</name>
        <dbReference type="ChEBI" id="CHEBI:29105"/>
    </cofactor>
    <text>Binds 2 Zn(2+) ions per subunit.</text>
</comment>
<comment type="pathway">
    <text evidence="1">Metabolic intermediate biosynthesis; chorismate biosynthesis; chorismate from D-erythrose 4-phosphate and phosphoenolpyruvate: step 2/7.</text>
</comment>
<comment type="pathway">
    <text evidence="1">Metabolic intermediate biosynthesis; chorismate biosynthesis; chorismate from D-erythrose 4-phosphate and phosphoenolpyruvate: step 3/7.</text>
</comment>
<comment type="pathway">
    <text evidence="1">Metabolic intermediate biosynthesis; chorismate biosynthesis; chorismate from D-erythrose 4-phosphate and phosphoenolpyruvate: step 4/7.</text>
</comment>
<comment type="pathway">
    <text evidence="1">Metabolic intermediate biosynthesis; chorismate biosynthesis; chorismate from D-erythrose 4-phosphate and phosphoenolpyruvate: step 5/7.</text>
</comment>
<comment type="pathway">
    <text evidence="1">Metabolic intermediate biosynthesis; chorismate biosynthesis; chorismate from D-erythrose 4-phosphate and phosphoenolpyruvate: step 6/7.</text>
</comment>
<comment type="subunit">
    <text evidence="1">Homodimer.</text>
</comment>
<comment type="subcellular location">
    <subcellularLocation>
        <location evidence="1">Cytoplasm</location>
    </subcellularLocation>
</comment>
<comment type="similarity">
    <text evidence="1">In the N-terminal section; belongs to the sugar phosphate cyclases superfamily. Dehydroquinate synthase family.</text>
</comment>
<comment type="similarity">
    <text evidence="1">In the 2nd section; belongs to the EPSP synthase family.</text>
</comment>
<comment type="similarity">
    <text evidence="1">In the 3rd section; belongs to the shikimate kinase family.</text>
</comment>
<comment type="similarity">
    <text evidence="1">In the 4th section; belongs to the type-I 3-dehydroquinase family.</text>
</comment>
<comment type="similarity">
    <text evidence="1">In the C-terminal section; belongs to the shikimate dehydrogenase family.</text>
</comment>
<evidence type="ECO:0000255" key="1">
    <source>
        <dbReference type="HAMAP-Rule" id="MF_03143"/>
    </source>
</evidence>
<proteinExistence type="inferred from homology"/>
<dbReference type="EC" id="4.2.3.4" evidence="1"/>
<dbReference type="EC" id="2.5.1.19" evidence="1"/>
<dbReference type="EC" id="2.7.1.71" evidence="1"/>
<dbReference type="EC" id="4.2.1.10" evidence="1"/>
<dbReference type="EC" id="1.1.1.25" evidence="1"/>
<dbReference type="EMBL" id="BA000052">
    <property type="protein sequence ID" value="BAE60669.1"/>
    <property type="molecule type" value="Genomic_DNA"/>
</dbReference>
<dbReference type="SMR" id="Q2UCP6"/>
<dbReference type="STRING" id="510516.Q2UCP6"/>
<dbReference type="EnsemblFungi" id="BAE60669">
    <property type="protein sequence ID" value="BAE60669"/>
    <property type="gene ID" value="AO090012000502"/>
</dbReference>
<dbReference type="HOGENOM" id="CLU_001201_1_2_1"/>
<dbReference type="OMA" id="SWANMSW"/>
<dbReference type="UniPathway" id="UPA00053">
    <property type="reaction ID" value="UER00085"/>
</dbReference>
<dbReference type="UniPathway" id="UPA00053">
    <property type="reaction ID" value="UER00086"/>
</dbReference>
<dbReference type="UniPathway" id="UPA00053">
    <property type="reaction ID" value="UER00087"/>
</dbReference>
<dbReference type="UniPathway" id="UPA00053">
    <property type="reaction ID" value="UER00088"/>
</dbReference>
<dbReference type="UniPathway" id="UPA00053">
    <property type="reaction ID" value="UER00089"/>
</dbReference>
<dbReference type="Proteomes" id="UP000006564">
    <property type="component" value="Chromosome 4"/>
</dbReference>
<dbReference type="GO" id="GO:0005737">
    <property type="term" value="C:cytoplasm"/>
    <property type="evidence" value="ECO:0007669"/>
    <property type="project" value="UniProtKB-SubCell"/>
</dbReference>
<dbReference type="GO" id="GO:0003855">
    <property type="term" value="F:3-dehydroquinate dehydratase activity"/>
    <property type="evidence" value="ECO:0007669"/>
    <property type="project" value="UniProtKB-UniRule"/>
</dbReference>
<dbReference type="GO" id="GO:0003856">
    <property type="term" value="F:3-dehydroquinate synthase activity"/>
    <property type="evidence" value="ECO:0007669"/>
    <property type="project" value="UniProtKB-UniRule"/>
</dbReference>
<dbReference type="GO" id="GO:0003866">
    <property type="term" value="F:3-phosphoshikimate 1-carboxyvinyltransferase activity"/>
    <property type="evidence" value="ECO:0007669"/>
    <property type="project" value="UniProtKB-UniRule"/>
</dbReference>
<dbReference type="GO" id="GO:0005524">
    <property type="term" value="F:ATP binding"/>
    <property type="evidence" value="ECO:0007669"/>
    <property type="project" value="UniProtKB-UniRule"/>
</dbReference>
<dbReference type="GO" id="GO:0046872">
    <property type="term" value="F:metal ion binding"/>
    <property type="evidence" value="ECO:0007669"/>
    <property type="project" value="UniProtKB-UniRule"/>
</dbReference>
<dbReference type="GO" id="GO:0004764">
    <property type="term" value="F:shikimate 3-dehydrogenase (NADP+) activity"/>
    <property type="evidence" value="ECO:0007669"/>
    <property type="project" value="UniProtKB-UniRule"/>
</dbReference>
<dbReference type="GO" id="GO:0004765">
    <property type="term" value="F:shikimate kinase activity"/>
    <property type="evidence" value="ECO:0007669"/>
    <property type="project" value="UniProtKB-UniRule"/>
</dbReference>
<dbReference type="GO" id="GO:0008652">
    <property type="term" value="P:amino acid biosynthetic process"/>
    <property type="evidence" value="ECO:0007669"/>
    <property type="project" value="UniProtKB-KW"/>
</dbReference>
<dbReference type="GO" id="GO:0009073">
    <property type="term" value="P:aromatic amino acid family biosynthetic process"/>
    <property type="evidence" value="ECO:0007669"/>
    <property type="project" value="UniProtKB-UniRule"/>
</dbReference>
<dbReference type="GO" id="GO:0009423">
    <property type="term" value="P:chorismate biosynthetic process"/>
    <property type="evidence" value="ECO:0007669"/>
    <property type="project" value="UniProtKB-UniRule"/>
</dbReference>
<dbReference type="CDD" id="cd00502">
    <property type="entry name" value="DHQase_I"/>
    <property type="match status" value="1"/>
</dbReference>
<dbReference type="CDD" id="cd08195">
    <property type="entry name" value="DHQS"/>
    <property type="match status" value="1"/>
</dbReference>
<dbReference type="CDD" id="cd01556">
    <property type="entry name" value="EPSP_synthase"/>
    <property type="match status" value="1"/>
</dbReference>
<dbReference type="CDD" id="cd01065">
    <property type="entry name" value="NAD_bind_Shikimate_DH"/>
    <property type="match status" value="1"/>
</dbReference>
<dbReference type="CDD" id="cd00464">
    <property type="entry name" value="SK"/>
    <property type="match status" value="1"/>
</dbReference>
<dbReference type="FunFam" id="1.20.1090.10:FF:000007">
    <property type="entry name" value="Pentafunctional AROM polypeptide"/>
    <property type="match status" value="1"/>
</dbReference>
<dbReference type="FunFam" id="3.20.20.70:FF:000135">
    <property type="entry name" value="Pentafunctional AROM polypeptide"/>
    <property type="match status" value="1"/>
</dbReference>
<dbReference type="FunFam" id="3.40.50.1970:FF:000007">
    <property type="entry name" value="Pentafunctional AROM polypeptide"/>
    <property type="match status" value="1"/>
</dbReference>
<dbReference type="FunFam" id="3.40.50.300:FF:001256">
    <property type="entry name" value="Pentafunctional AROM polypeptide"/>
    <property type="match status" value="1"/>
</dbReference>
<dbReference type="FunFam" id="3.65.10.10:FF:000007">
    <property type="entry name" value="Pentafunctional AROM polypeptide"/>
    <property type="match status" value="1"/>
</dbReference>
<dbReference type="FunFam" id="3.65.10.10:FF:000008">
    <property type="entry name" value="Pentafunctional AROM polypeptide"/>
    <property type="match status" value="1"/>
</dbReference>
<dbReference type="Gene3D" id="3.40.50.1970">
    <property type="match status" value="1"/>
</dbReference>
<dbReference type="Gene3D" id="3.20.20.70">
    <property type="entry name" value="Aldolase class I"/>
    <property type="match status" value="1"/>
</dbReference>
<dbReference type="Gene3D" id="1.20.1090.10">
    <property type="entry name" value="Dehydroquinate synthase-like - alpha domain"/>
    <property type="match status" value="1"/>
</dbReference>
<dbReference type="Gene3D" id="3.65.10.10">
    <property type="entry name" value="Enolpyruvate transferase domain"/>
    <property type="match status" value="2"/>
</dbReference>
<dbReference type="Gene3D" id="3.40.50.10860">
    <property type="entry name" value="Leucine Dehydrogenase, chain A, domain 1"/>
    <property type="match status" value="1"/>
</dbReference>
<dbReference type="Gene3D" id="3.40.50.720">
    <property type="entry name" value="NAD(P)-binding Rossmann-like Domain"/>
    <property type="match status" value="1"/>
</dbReference>
<dbReference type="Gene3D" id="3.40.50.300">
    <property type="entry name" value="P-loop containing nucleotide triphosphate hydrolases"/>
    <property type="match status" value="1"/>
</dbReference>
<dbReference type="HAMAP" id="MF_00210">
    <property type="entry name" value="EPSP_synth"/>
    <property type="match status" value="1"/>
</dbReference>
<dbReference type="HAMAP" id="MF_03143">
    <property type="entry name" value="Pentafunct_AroM"/>
    <property type="match status" value="1"/>
</dbReference>
<dbReference type="HAMAP" id="MF_00109">
    <property type="entry name" value="Shikimate_kinase"/>
    <property type="match status" value="1"/>
</dbReference>
<dbReference type="InterPro" id="IPR018508">
    <property type="entry name" value="3-dehydroquinate_DH_AS"/>
</dbReference>
<dbReference type="InterPro" id="IPR013785">
    <property type="entry name" value="Aldolase_TIM"/>
</dbReference>
<dbReference type="InterPro" id="IPR046346">
    <property type="entry name" value="Aminoacid_DH-like_N_sf"/>
</dbReference>
<dbReference type="InterPro" id="IPR016037">
    <property type="entry name" value="DHQ_synth_AroB"/>
</dbReference>
<dbReference type="InterPro" id="IPR030960">
    <property type="entry name" value="DHQS/DOIS_N"/>
</dbReference>
<dbReference type="InterPro" id="IPR056179">
    <property type="entry name" value="DHQS_C"/>
</dbReference>
<dbReference type="InterPro" id="IPR001381">
    <property type="entry name" value="DHquinase_I"/>
</dbReference>
<dbReference type="InterPro" id="IPR001986">
    <property type="entry name" value="Enolpyruvate_Tfrase_dom"/>
</dbReference>
<dbReference type="InterPro" id="IPR036968">
    <property type="entry name" value="Enolpyruvate_Tfrase_sf"/>
</dbReference>
<dbReference type="InterPro" id="IPR006264">
    <property type="entry name" value="EPSP_synthase"/>
</dbReference>
<dbReference type="InterPro" id="IPR023193">
    <property type="entry name" value="EPSP_synthase_CS"/>
</dbReference>
<dbReference type="InterPro" id="IPR036291">
    <property type="entry name" value="NAD(P)-bd_dom_sf"/>
</dbReference>
<dbReference type="InterPro" id="IPR027417">
    <property type="entry name" value="P-loop_NTPase"/>
</dbReference>
<dbReference type="InterPro" id="IPR008289">
    <property type="entry name" value="Pentafunct_AroM"/>
</dbReference>
<dbReference type="InterPro" id="IPR013792">
    <property type="entry name" value="RNA3'P_cycl/enolpyr_Trfase_a/b"/>
</dbReference>
<dbReference type="InterPro" id="IPR031322">
    <property type="entry name" value="Shikimate/glucono_kinase"/>
</dbReference>
<dbReference type="InterPro" id="IPR013708">
    <property type="entry name" value="Shikimate_DH-bd_N"/>
</dbReference>
<dbReference type="InterPro" id="IPR010110">
    <property type="entry name" value="Shikimate_DH_AroM-type"/>
</dbReference>
<dbReference type="InterPro" id="IPR000623">
    <property type="entry name" value="Shikimate_kinase/TSH1"/>
</dbReference>
<dbReference type="InterPro" id="IPR023000">
    <property type="entry name" value="Shikimate_kinase_CS"/>
</dbReference>
<dbReference type="NCBIfam" id="TIGR01356">
    <property type="entry name" value="aroA"/>
    <property type="match status" value="1"/>
</dbReference>
<dbReference type="NCBIfam" id="TIGR01357">
    <property type="entry name" value="aroB"/>
    <property type="match status" value="1"/>
</dbReference>
<dbReference type="NCBIfam" id="TIGR01093">
    <property type="entry name" value="aroD"/>
    <property type="match status" value="1"/>
</dbReference>
<dbReference type="NCBIfam" id="TIGR01809">
    <property type="entry name" value="Shik-DH-AROM"/>
    <property type="match status" value="1"/>
</dbReference>
<dbReference type="PANTHER" id="PTHR21090">
    <property type="entry name" value="AROM/DEHYDROQUINATE SYNTHASE"/>
    <property type="match status" value="1"/>
</dbReference>
<dbReference type="PANTHER" id="PTHR21090:SF5">
    <property type="entry name" value="PENTAFUNCTIONAL AROM POLYPEPTIDE"/>
    <property type="match status" value="1"/>
</dbReference>
<dbReference type="Pfam" id="PF01761">
    <property type="entry name" value="DHQ_synthase"/>
    <property type="match status" value="1"/>
</dbReference>
<dbReference type="Pfam" id="PF24621">
    <property type="entry name" value="DHQS_C"/>
    <property type="match status" value="1"/>
</dbReference>
<dbReference type="Pfam" id="PF01487">
    <property type="entry name" value="DHquinase_I"/>
    <property type="match status" value="1"/>
</dbReference>
<dbReference type="Pfam" id="PF00275">
    <property type="entry name" value="EPSP_synthase"/>
    <property type="match status" value="1"/>
</dbReference>
<dbReference type="Pfam" id="PF08501">
    <property type="entry name" value="Shikimate_dh_N"/>
    <property type="match status" value="1"/>
</dbReference>
<dbReference type="Pfam" id="PF01202">
    <property type="entry name" value="SKI"/>
    <property type="match status" value="1"/>
</dbReference>
<dbReference type="PIRSF" id="PIRSF000514">
    <property type="entry name" value="Pentafunct_AroM"/>
    <property type="match status" value="1"/>
</dbReference>
<dbReference type="PRINTS" id="PR01100">
    <property type="entry name" value="SHIKIMTKNASE"/>
</dbReference>
<dbReference type="SUPFAM" id="SSF51569">
    <property type="entry name" value="Aldolase"/>
    <property type="match status" value="1"/>
</dbReference>
<dbReference type="SUPFAM" id="SSF53223">
    <property type="entry name" value="Aminoacid dehydrogenase-like, N-terminal domain"/>
    <property type="match status" value="1"/>
</dbReference>
<dbReference type="SUPFAM" id="SSF56796">
    <property type="entry name" value="Dehydroquinate synthase-like"/>
    <property type="match status" value="1"/>
</dbReference>
<dbReference type="SUPFAM" id="SSF55205">
    <property type="entry name" value="EPT/RTPC-like"/>
    <property type="match status" value="1"/>
</dbReference>
<dbReference type="SUPFAM" id="SSF51735">
    <property type="entry name" value="NAD(P)-binding Rossmann-fold domains"/>
    <property type="match status" value="1"/>
</dbReference>
<dbReference type="SUPFAM" id="SSF52540">
    <property type="entry name" value="P-loop containing nucleoside triphosphate hydrolases"/>
    <property type="match status" value="1"/>
</dbReference>
<dbReference type="PROSITE" id="PS01028">
    <property type="entry name" value="DEHYDROQUINASE_I"/>
    <property type="match status" value="1"/>
</dbReference>
<dbReference type="PROSITE" id="PS00104">
    <property type="entry name" value="EPSP_SYNTHASE_1"/>
    <property type="match status" value="1"/>
</dbReference>
<dbReference type="PROSITE" id="PS00885">
    <property type="entry name" value="EPSP_SYNTHASE_2"/>
    <property type="match status" value="1"/>
</dbReference>
<dbReference type="PROSITE" id="PS01128">
    <property type="entry name" value="SHIKIMATE_KINASE"/>
    <property type="match status" value="1"/>
</dbReference>
<protein>
    <recommendedName>
        <fullName evidence="1">Pentafunctional AROM polypeptide</fullName>
    </recommendedName>
    <domain>
        <recommendedName>
            <fullName evidence="1">3-dehydroquinate synthase</fullName>
            <shortName evidence="1">DHQS</shortName>
            <ecNumber evidence="1">4.2.3.4</ecNumber>
        </recommendedName>
    </domain>
    <domain>
        <recommendedName>
            <fullName evidence="1">3-phosphoshikimate 1-carboxyvinyltransferase</fullName>
            <ecNumber evidence="1">2.5.1.19</ecNumber>
        </recommendedName>
        <alternativeName>
            <fullName evidence="1">5-enolpyruvylshikimate-3-phosphate synthase</fullName>
            <shortName evidence="1">EPSP synthase</shortName>
            <shortName evidence="1">EPSPS</shortName>
        </alternativeName>
    </domain>
    <domain>
        <recommendedName>
            <fullName evidence="1">Shikimate kinase</fullName>
            <shortName evidence="1">SK</shortName>
            <ecNumber evidence="1">2.7.1.71</ecNumber>
        </recommendedName>
    </domain>
    <domain>
        <recommendedName>
            <fullName evidence="1">3-dehydroquinate dehydratase</fullName>
            <shortName evidence="1">3-dehydroquinase</shortName>
            <ecNumber evidence="1">4.2.1.10</ecNumber>
        </recommendedName>
    </domain>
    <domain>
        <recommendedName>
            <fullName evidence="1">Shikimate dehydrogenase</fullName>
            <ecNumber evidence="1">1.1.1.25</ecNumber>
        </recommendedName>
    </domain>
</protein>
<gene>
    <name evidence="1" type="primary">aroM</name>
    <name type="ORF">AO090012000502</name>
</gene>
<feature type="chain" id="PRO_0000406707" description="Pentafunctional AROM polypeptide">
    <location>
        <begin position="1"/>
        <end position="1595"/>
    </location>
</feature>
<feature type="region of interest" description="3-dehydroquinate synthase">
    <location>
        <begin position="1"/>
        <end position="384"/>
    </location>
</feature>
<feature type="region of interest" description="EPSP synthase">
    <location>
        <begin position="397"/>
        <end position="842"/>
    </location>
</feature>
<feature type="region of interest" description="Shikimate kinase">
    <location>
        <begin position="864"/>
        <end position="1055"/>
    </location>
</feature>
<feature type="region of interest" description="3-dehydroquinase">
    <location>
        <begin position="1056"/>
        <end position="1276"/>
    </location>
</feature>
<feature type="region of interest" description="Shikimate dehydrogenase">
    <location>
        <begin position="1289"/>
        <end position="1595"/>
    </location>
</feature>
<feature type="active site" description="Proton acceptor; for 3-dehydroquinate synthase activity" evidence="1">
    <location>
        <position position="260"/>
    </location>
</feature>
<feature type="active site" description="Proton acceptor; for 3-dehydroquinate synthase activity" evidence="1">
    <location>
        <position position="275"/>
    </location>
</feature>
<feature type="active site" description="For EPSP synthase activity" evidence="1">
    <location>
        <position position="824"/>
    </location>
</feature>
<feature type="active site" description="Proton acceptor; for 3-dehydroquinate dehydratase activity" evidence="1">
    <location>
        <position position="1179"/>
    </location>
</feature>
<feature type="active site" description="Schiff-base intermediate with substrate; for 3-dehydroquinate dehydratase activity" evidence="1">
    <location>
        <position position="1207"/>
    </location>
</feature>
<feature type="binding site" evidence="1">
    <location>
        <begin position="44"/>
        <end position="46"/>
    </location>
    <ligand>
        <name>NAD(+)</name>
        <dbReference type="ChEBI" id="CHEBI:57540"/>
    </ligand>
</feature>
<feature type="binding site" evidence="1">
    <location>
        <begin position="81"/>
        <end position="84"/>
    </location>
    <ligand>
        <name>NAD(+)</name>
        <dbReference type="ChEBI" id="CHEBI:57540"/>
    </ligand>
</feature>
<feature type="binding site" evidence="1">
    <location>
        <begin position="114"/>
        <end position="116"/>
    </location>
    <ligand>
        <name>NAD(+)</name>
        <dbReference type="ChEBI" id="CHEBI:57540"/>
    </ligand>
</feature>
<feature type="binding site" evidence="1">
    <location>
        <position position="119"/>
    </location>
    <ligand>
        <name>NAD(+)</name>
        <dbReference type="ChEBI" id="CHEBI:57540"/>
    </ligand>
</feature>
<feature type="binding site" evidence="1">
    <location>
        <position position="130"/>
    </location>
    <ligand>
        <name>7-phospho-2-dehydro-3-deoxy-D-arabino-heptonate</name>
        <dbReference type="ChEBI" id="CHEBI:58394"/>
    </ligand>
</feature>
<feature type="binding site" evidence="1">
    <location>
        <begin position="139"/>
        <end position="140"/>
    </location>
    <ligand>
        <name>NAD(+)</name>
        <dbReference type="ChEBI" id="CHEBI:57540"/>
    </ligand>
</feature>
<feature type="binding site" evidence="1">
    <location>
        <position position="146"/>
    </location>
    <ligand>
        <name>7-phospho-2-dehydro-3-deoxy-D-arabino-heptonate</name>
        <dbReference type="ChEBI" id="CHEBI:58394"/>
    </ligand>
</feature>
<feature type="binding site" evidence="1">
    <location>
        <position position="152"/>
    </location>
    <ligand>
        <name>7-phospho-2-dehydro-3-deoxy-D-arabino-heptonate</name>
        <dbReference type="ChEBI" id="CHEBI:58394"/>
    </ligand>
</feature>
<feature type="binding site" evidence="1">
    <location>
        <position position="161"/>
    </location>
    <ligand>
        <name>NAD(+)</name>
        <dbReference type="ChEBI" id="CHEBI:57540"/>
    </ligand>
</feature>
<feature type="binding site" evidence="1">
    <location>
        <position position="162"/>
    </location>
    <ligand>
        <name>7-phospho-2-dehydro-3-deoxy-D-arabino-heptonate</name>
        <dbReference type="ChEBI" id="CHEBI:58394"/>
    </ligand>
</feature>
<feature type="binding site" evidence="1">
    <location>
        <begin position="179"/>
        <end position="182"/>
    </location>
    <ligand>
        <name>NAD(+)</name>
        <dbReference type="ChEBI" id="CHEBI:57540"/>
    </ligand>
</feature>
<feature type="binding site" evidence="1">
    <location>
        <position position="190"/>
    </location>
    <ligand>
        <name>NAD(+)</name>
        <dbReference type="ChEBI" id="CHEBI:57540"/>
    </ligand>
</feature>
<feature type="binding site" evidence="1">
    <location>
        <begin position="194"/>
        <end position="197"/>
    </location>
    <ligand>
        <name>7-phospho-2-dehydro-3-deoxy-D-arabino-heptonate</name>
        <dbReference type="ChEBI" id="CHEBI:58394"/>
    </ligand>
</feature>
<feature type="binding site" evidence="1">
    <location>
        <position position="194"/>
    </location>
    <ligand>
        <name>Zn(2+)</name>
        <dbReference type="ChEBI" id="CHEBI:29105"/>
        <note>catalytic</note>
    </ligand>
</feature>
<feature type="binding site" evidence="1">
    <location>
        <position position="250"/>
    </location>
    <ligand>
        <name>7-phospho-2-dehydro-3-deoxy-D-arabino-heptonate</name>
        <dbReference type="ChEBI" id="CHEBI:58394"/>
    </ligand>
</feature>
<feature type="binding site" evidence="1">
    <location>
        <begin position="264"/>
        <end position="268"/>
    </location>
    <ligand>
        <name>7-phospho-2-dehydro-3-deoxy-D-arabino-heptonate</name>
        <dbReference type="ChEBI" id="CHEBI:58394"/>
    </ligand>
</feature>
<feature type="binding site" evidence="1">
    <location>
        <position position="271"/>
    </location>
    <ligand>
        <name>7-phospho-2-dehydro-3-deoxy-D-arabino-heptonate</name>
        <dbReference type="ChEBI" id="CHEBI:58394"/>
    </ligand>
</feature>
<feature type="binding site" evidence="1">
    <location>
        <position position="271"/>
    </location>
    <ligand>
        <name>Zn(2+)</name>
        <dbReference type="ChEBI" id="CHEBI:29105"/>
        <note>catalytic</note>
    </ligand>
</feature>
<feature type="binding site" evidence="1">
    <location>
        <position position="287"/>
    </location>
    <ligand>
        <name>7-phospho-2-dehydro-3-deoxy-D-arabino-heptonate</name>
        <dbReference type="ChEBI" id="CHEBI:58394"/>
    </ligand>
</feature>
<feature type="binding site" evidence="1">
    <location>
        <position position="287"/>
    </location>
    <ligand>
        <name>Zn(2+)</name>
        <dbReference type="ChEBI" id="CHEBI:29105"/>
        <note>catalytic</note>
    </ligand>
</feature>
<feature type="binding site" evidence="1">
    <location>
        <position position="356"/>
    </location>
    <ligand>
        <name>7-phospho-2-dehydro-3-deoxy-D-arabino-heptonate</name>
        <dbReference type="ChEBI" id="CHEBI:58394"/>
    </ligand>
</feature>
<feature type="binding site" evidence="1">
    <location>
        <begin position="871"/>
        <end position="878"/>
    </location>
    <ligand>
        <name>ATP</name>
        <dbReference type="ChEBI" id="CHEBI:30616"/>
    </ligand>
</feature>
<accession>Q2UCP6</accession>
<reference key="1">
    <citation type="journal article" date="2005" name="Nature">
        <title>Genome sequencing and analysis of Aspergillus oryzae.</title>
        <authorList>
            <person name="Machida M."/>
            <person name="Asai K."/>
            <person name="Sano M."/>
            <person name="Tanaka T."/>
            <person name="Kumagai T."/>
            <person name="Terai G."/>
            <person name="Kusumoto K."/>
            <person name="Arima T."/>
            <person name="Akita O."/>
            <person name="Kashiwagi Y."/>
            <person name="Abe K."/>
            <person name="Gomi K."/>
            <person name="Horiuchi H."/>
            <person name="Kitamoto K."/>
            <person name="Kobayashi T."/>
            <person name="Takeuchi M."/>
            <person name="Denning D.W."/>
            <person name="Galagan J.E."/>
            <person name="Nierman W.C."/>
            <person name="Yu J."/>
            <person name="Archer D.B."/>
            <person name="Bennett J.W."/>
            <person name="Bhatnagar D."/>
            <person name="Cleveland T.E."/>
            <person name="Fedorova N.D."/>
            <person name="Gotoh O."/>
            <person name="Horikawa H."/>
            <person name="Hosoyama A."/>
            <person name="Ichinomiya M."/>
            <person name="Igarashi R."/>
            <person name="Iwashita K."/>
            <person name="Juvvadi P.R."/>
            <person name="Kato M."/>
            <person name="Kato Y."/>
            <person name="Kin T."/>
            <person name="Kokubun A."/>
            <person name="Maeda H."/>
            <person name="Maeyama N."/>
            <person name="Maruyama J."/>
            <person name="Nagasaki H."/>
            <person name="Nakajima T."/>
            <person name="Oda K."/>
            <person name="Okada K."/>
            <person name="Paulsen I."/>
            <person name="Sakamoto K."/>
            <person name="Sawano T."/>
            <person name="Takahashi M."/>
            <person name="Takase K."/>
            <person name="Terabayashi Y."/>
            <person name="Wortman J.R."/>
            <person name="Yamada O."/>
            <person name="Yamagata Y."/>
            <person name="Anazawa H."/>
            <person name="Hata Y."/>
            <person name="Koide Y."/>
            <person name="Komori T."/>
            <person name="Koyama Y."/>
            <person name="Minetoki T."/>
            <person name="Suharnan S."/>
            <person name="Tanaka A."/>
            <person name="Isono K."/>
            <person name="Kuhara S."/>
            <person name="Ogasawara N."/>
            <person name="Kikuchi H."/>
        </authorList>
    </citation>
    <scope>NUCLEOTIDE SEQUENCE [LARGE SCALE GENOMIC DNA]</scope>
    <source>
        <strain>ATCC 42149 / RIB 40</strain>
    </source>
</reference>
<organism>
    <name type="scientific">Aspergillus oryzae (strain ATCC 42149 / RIB 40)</name>
    <name type="common">Yellow koji mold</name>
    <dbReference type="NCBI Taxonomy" id="510516"/>
    <lineage>
        <taxon>Eukaryota</taxon>
        <taxon>Fungi</taxon>
        <taxon>Dikarya</taxon>
        <taxon>Ascomycota</taxon>
        <taxon>Pezizomycotina</taxon>
        <taxon>Eurotiomycetes</taxon>
        <taxon>Eurotiomycetidae</taxon>
        <taxon>Eurotiales</taxon>
        <taxon>Aspergillaceae</taxon>
        <taxon>Aspergillus</taxon>
        <taxon>Aspergillus subgen. Circumdati</taxon>
    </lineage>
</organism>
<name>ARO1_ASPOR</name>
<keyword id="KW-0028">Amino-acid biosynthesis</keyword>
<keyword id="KW-0057">Aromatic amino acid biosynthesis</keyword>
<keyword id="KW-0067">ATP-binding</keyword>
<keyword id="KW-0963">Cytoplasm</keyword>
<keyword id="KW-0418">Kinase</keyword>
<keyword id="KW-0456">Lyase</keyword>
<keyword id="KW-0479">Metal-binding</keyword>
<keyword id="KW-0511">Multifunctional enzyme</keyword>
<keyword id="KW-0521">NADP</keyword>
<keyword id="KW-0547">Nucleotide-binding</keyword>
<keyword id="KW-0560">Oxidoreductase</keyword>
<keyword id="KW-1185">Reference proteome</keyword>
<keyword id="KW-0808">Transferase</keyword>
<keyword id="KW-0862">Zinc</keyword>